<organism>
    <name type="scientific">Rickettsia bellii (strain RML369-C)</name>
    <dbReference type="NCBI Taxonomy" id="336407"/>
    <lineage>
        <taxon>Bacteria</taxon>
        <taxon>Pseudomonadati</taxon>
        <taxon>Pseudomonadota</taxon>
        <taxon>Alphaproteobacteria</taxon>
        <taxon>Rickettsiales</taxon>
        <taxon>Rickettsiaceae</taxon>
        <taxon>Rickettsieae</taxon>
        <taxon>Rickettsia</taxon>
        <taxon>belli group</taxon>
    </lineage>
</organism>
<keyword id="KW-0040">ANK repeat</keyword>
<keyword id="KW-0677">Repeat</keyword>
<protein>
    <recommendedName>
        <fullName>Putative ankyrin repeat protein RBE_0623</fullName>
    </recommendedName>
</protein>
<gene>
    <name type="ordered locus">RBE_0623</name>
</gene>
<name>Y623_RICBR</name>
<feature type="chain" id="PRO_0000280916" description="Putative ankyrin repeat protein RBE_0623">
    <location>
        <begin position="1"/>
        <end position="250"/>
    </location>
</feature>
<feature type="repeat" description="ANK 1">
    <location>
        <begin position="70"/>
        <end position="99"/>
    </location>
</feature>
<feature type="repeat" description="ANK 2">
    <location>
        <begin position="104"/>
        <end position="134"/>
    </location>
</feature>
<feature type="repeat" description="ANK 3">
    <location>
        <begin position="137"/>
        <end position="166"/>
    </location>
</feature>
<dbReference type="EMBL" id="CP000087">
    <property type="protein sequence ID" value="ABE04704.1"/>
    <property type="molecule type" value="Genomic_DNA"/>
</dbReference>
<dbReference type="RefSeq" id="WP_011477292.1">
    <property type="nucleotide sequence ID" value="NC_007940.1"/>
</dbReference>
<dbReference type="SMR" id="Q1RIW0"/>
<dbReference type="KEGG" id="rbe:RBE_0623"/>
<dbReference type="HOGENOM" id="CLU_1110724_0_0_5"/>
<dbReference type="Proteomes" id="UP000001951">
    <property type="component" value="Chromosome"/>
</dbReference>
<dbReference type="Gene3D" id="1.25.40.20">
    <property type="entry name" value="Ankyrin repeat-containing domain"/>
    <property type="match status" value="1"/>
</dbReference>
<dbReference type="InterPro" id="IPR002110">
    <property type="entry name" value="Ankyrin_rpt"/>
</dbReference>
<dbReference type="InterPro" id="IPR036770">
    <property type="entry name" value="Ankyrin_rpt-contain_sf"/>
</dbReference>
<dbReference type="PANTHER" id="PTHR24198">
    <property type="entry name" value="ANKYRIN REPEAT AND PROTEIN KINASE DOMAIN-CONTAINING PROTEIN"/>
    <property type="match status" value="1"/>
</dbReference>
<dbReference type="PANTHER" id="PTHR24198:SF165">
    <property type="entry name" value="ANKYRIN REPEAT-CONTAINING PROTEIN-RELATED"/>
    <property type="match status" value="1"/>
</dbReference>
<dbReference type="Pfam" id="PF12796">
    <property type="entry name" value="Ank_2"/>
    <property type="match status" value="1"/>
</dbReference>
<dbReference type="SMART" id="SM00248">
    <property type="entry name" value="ANK"/>
    <property type="match status" value="3"/>
</dbReference>
<dbReference type="SUPFAM" id="SSF48403">
    <property type="entry name" value="Ankyrin repeat"/>
    <property type="match status" value="1"/>
</dbReference>
<dbReference type="PROSITE" id="PS50297">
    <property type="entry name" value="ANK_REP_REGION"/>
    <property type="match status" value="1"/>
</dbReference>
<accession>Q1RIW0</accession>
<reference key="1">
    <citation type="journal article" date="2006" name="PLoS Genet.">
        <title>Genome sequence of Rickettsia bellii illuminates the role of amoebae in gene exchanges between intracellular pathogens.</title>
        <authorList>
            <person name="Ogata H."/>
            <person name="La Scola B."/>
            <person name="Audic S."/>
            <person name="Renesto P."/>
            <person name="Blanc G."/>
            <person name="Robert C."/>
            <person name="Fournier P.-E."/>
            <person name="Claverie J.-M."/>
            <person name="Raoult D."/>
        </authorList>
    </citation>
    <scope>NUCLEOTIDE SEQUENCE [LARGE SCALE GENOMIC DNA]</scope>
    <source>
        <strain>RML369-C</strain>
    </source>
</reference>
<sequence length="250" mass="28527">MPKTINNYNRFLPVVHFSQTELEESLCNAVIHNDKKAAEIAIFKLNISDNFTSDLRTNKSYIDDTHNIFIGDSLPLVAVKNNNLDMLKMLLSCGFEPNTPAAANCYTPLWYVTYKGYTNSVRKLLEYPINNINETFGKETPLKSALIHKHTEIAKLLIDKINPDKFLFNGVENIALLAHDQFMFIINEISTDKKISLFKLCSKNITEHQDFILFGKGEAEINNMHINNTYMLDYLDNNHDDSTTIIGSID</sequence>
<proteinExistence type="predicted"/>